<protein>
    <recommendedName>
        <fullName>Ferredoxin, heterocyst</fullName>
    </recommendedName>
</protein>
<comment type="function">
    <text>Ferredoxins are iron-sulfur proteins that transfer electrons in a wide variety of metabolic reactions.</text>
</comment>
<comment type="cofactor">
    <cofactor>
        <name>[2Fe-2S] cluster</name>
        <dbReference type="ChEBI" id="CHEBI:190135"/>
    </cofactor>
    <text>Binds 1 [2Fe-2S] cluster.</text>
</comment>
<comment type="miscellaneous">
    <text>This ferredoxin is expressed by heterocysts and differs from the ferredoxin expressed in vegetative cells.</text>
</comment>
<comment type="similarity">
    <text evidence="3">Belongs to the 2Fe2S plant-type ferredoxin family.</text>
</comment>
<evidence type="ECO:0000250" key="1"/>
<evidence type="ECO:0000255" key="2">
    <source>
        <dbReference type="PROSITE-ProRule" id="PRU00465"/>
    </source>
</evidence>
<evidence type="ECO:0000305" key="3"/>
<dbReference type="EMBL" id="X63011">
    <property type="protein sequence ID" value="CAA44739.1"/>
    <property type="molecule type" value="Genomic_DNA"/>
</dbReference>
<dbReference type="SMR" id="P28610"/>
<dbReference type="GO" id="GO:0051537">
    <property type="term" value="F:2 iron, 2 sulfur cluster binding"/>
    <property type="evidence" value="ECO:0007669"/>
    <property type="project" value="UniProtKB-KW"/>
</dbReference>
<dbReference type="GO" id="GO:0009055">
    <property type="term" value="F:electron transfer activity"/>
    <property type="evidence" value="ECO:0007669"/>
    <property type="project" value="InterPro"/>
</dbReference>
<dbReference type="GO" id="GO:0046872">
    <property type="term" value="F:metal ion binding"/>
    <property type="evidence" value="ECO:0007669"/>
    <property type="project" value="UniProtKB-KW"/>
</dbReference>
<dbReference type="GO" id="GO:0022900">
    <property type="term" value="P:electron transport chain"/>
    <property type="evidence" value="ECO:0007669"/>
    <property type="project" value="InterPro"/>
</dbReference>
<dbReference type="GO" id="GO:0043158">
    <property type="term" value="P:heterocyst development"/>
    <property type="evidence" value="ECO:0007669"/>
    <property type="project" value="UniProtKB-KW"/>
</dbReference>
<dbReference type="CDD" id="cd00207">
    <property type="entry name" value="fer2"/>
    <property type="match status" value="1"/>
</dbReference>
<dbReference type="Gene3D" id="3.10.20.30">
    <property type="match status" value="1"/>
</dbReference>
<dbReference type="InterPro" id="IPR036010">
    <property type="entry name" value="2Fe-2S_ferredoxin-like_sf"/>
</dbReference>
<dbReference type="InterPro" id="IPR001041">
    <property type="entry name" value="2Fe-2S_ferredoxin-type"/>
</dbReference>
<dbReference type="InterPro" id="IPR006058">
    <property type="entry name" value="2Fe2S_fd_BS"/>
</dbReference>
<dbReference type="InterPro" id="IPR012675">
    <property type="entry name" value="Beta-grasp_dom_sf"/>
</dbReference>
<dbReference type="InterPro" id="IPR010241">
    <property type="entry name" value="Fd_pln"/>
</dbReference>
<dbReference type="NCBIfam" id="TIGR02008">
    <property type="entry name" value="fdx_plant"/>
    <property type="match status" value="1"/>
</dbReference>
<dbReference type="PANTHER" id="PTHR43112">
    <property type="entry name" value="FERREDOXIN"/>
    <property type="match status" value="1"/>
</dbReference>
<dbReference type="PANTHER" id="PTHR43112:SF3">
    <property type="entry name" value="FERREDOXIN-2, CHLOROPLASTIC"/>
    <property type="match status" value="1"/>
</dbReference>
<dbReference type="Pfam" id="PF00111">
    <property type="entry name" value="Fer2"/>
    <property type="match status" value="1"/>
</dbReference>
<dbReference type="SUPFAM" id="SSF54292">
    <property type="entry name" value="2Fe-2S ferredoxin-like"/>
    <property type="match status" value="1"/>
</dbReference>
<dbReference type="PROSITE" id="PS00197">
    <property type="entry name" value="2FE2S_FER_1"/>
    <property type="match status" value="1"/>
</dbReference>
<dbReference type="PROSITE" id="PS51085">
    <property type="entry name" value="2FE2S_FER_2"/>
    <property type="match status" value="1"/>
</dbReference>
<keyword id="KW-0001">2Fe-2S</keyword>
<keyword id="KW-0249">Electron transport</keyword>
<keyword id="KW-0364">Heterocyst</keyword>
<keyword id="KW-0408">Iron</keyword>
<keyword id="KW-0411">Iron-sulfur</keyword>
<keyword id="KW-0479">Metal-binding</keyword>
<keyword id="KW-0813">Transport</keyword>
<reference key="1">
    <citation type="journal article" date="1992" name="Plant Mol. Biol.">
        <title>Coding sequence of a heterocyst ferredoxin gene (fdxH) isolated from the nitrogen-fixing cyanobacterium Calothrix sp. PCC 7601.</title>
        <authorList>
            <person name="Schrautemeier B."/>
            <person name="Boehme H."/>
        </authorList>
    </citation>
    <scope>NUCLEOTIDE SEQUENCE [GENOMIC DNA]</scope>
</reference>
<organism>
    <name type="scientific">Microchaete diplosiphon</name>
    <name type="common">Fremyella diplosiphon</name>
    <dbReference type="NCBI Taxonomy" id="1197"/>
    <lineage>
        <taxon>Bacteria</taxon>
        <taxon>Bacillati</taxon>
        <taxon>Cyanobacteriota</taxon>
        <taxon>Cyanophyceae</taxon>
        <taxon>Nostocales</taxon>
        <taxon>Rivulariaceae</taxon>
        <taxon>Microchaete</taxon>
    </lineage>
</organism>
<sequence>MATYQVRLINKKEDLDSTIEIDEDTTILEGAAENGIELPFSCHSGSCSSCVGKVVEGEVDQSDQIFLDDEQMSKGFALLCVTYPRSNCTIKTHQEPYLV</sequence>
<gene>
    <name type="primary">fdxH</name>
</gene>
<name>FERH_MICDP</name>
<feature type="initiator methionine" description="Removed" evidence="1">
    <location>
        <position position="1"/>
    </location>
</feature>
<feature type="chain" id="PRO_0000189333" description="Ferredoxin, heterocyst">
    <location>
        <begin position="2"/>
        <end position="99"/>
    </location>
</feature>
<feature type="domain" description="2Fe-2S ferredoxin-type" evidence="2">
    <location>
        <begin position="4"/>
        <end position="96"/>
    </location>
</feature>
<feature type="binding site" evidence="2">
    <location>
        <position position="42"/>
    </location>
    <ligand>
        <name>[2Fe-2S] cluster</name>
        <dbReference type="ChEBI" id="CHEBI:190135"/>
    </ligand>
</feature>
<feature type="binding site" evidence="2">
    <location>
        <position position="47"/>
    </location>
    <ligand>
        <name>[2Fe-2S] cluster</name>
        <dbReference type="ChEBI" id="CHEBI:190135"/>
    </ligand>
</feature>
<feature type="binding site" evidence="2">
    <location>
        <position position="50"/>
    </location>
    <ligand>
        <name>[2Fe-2S] cluster</name>
        <dbReference type="ChEBI" id="CHEBI:190135"/>
    </ligand>
</feature>
<feature type="binding site" evidence="2">
    <location>
        <position position="80"/>
    </location>
    <ligand>
        <name>[2Fe-2S] cluster</name>
        <dbReference type="ChEBI" id="CHEBI:190135"/>
    </ligand>
</feature>
<proteinExistence type="inferred from homology"/>
<accession>P28610</accession>